<accession>Q20735</accession>
<sequence>MTNSSEFTDVLQSRDPCVSNGIVINIDPIDPEPTPIRKEFTCEDTFHHEHHGNSEGFKTLTAFLCLMLSAFLNFFLLTVIHDVVPRQPLPDLTFMIIPQQRWAWSVGDVLSTVSSVVAFTIIFLHHQRWIVLRRTFLLGAIMYGLRAVILGVTFLPPSFHNRDEICQPQVNRTAMYGMEIATRFLTYVITLGLTSGQDKILCGDLMFSGHTVVLTIMYFVQLQYTPRGLVILRYIAAPITFLGIAALVVSGGHYTMDVLIAYWLTSHVFWSYHQIFEMRKDDRPQAPLSRLWWFWLCYWFESDVADGKLVNKWNWPLEGPQRMHTIMNRINYKLQ</sequence>
<protein>
    <recommendedName>
        <fullName>Phosphatidylcholine:ceramide cholinephosphotransferase 2</fullName>
        <shortName evidence="4">PC:ceramide cholinephosphotransferase 2</shortName>
        <ecNumber evidence="3">2.7.8.27</ecNumber>
    </recommendedName>
    <alternativeName>
        <fullName evidence="4">Sphingomyelin synthase 2</fullName>
        <shortName evidence="4">CSS3alpha2</shortName>
        <shortName evidence="4">SMS-2</shortName>
    </alternativeName>
</protein>
<evidence type="ECO:0000250" key="1"/>
<evidence type="ECO:0000255" key="2"/>
<evidence type="ECO:0000269" key="3">
    <source>
    </source>
</evidence>
<evidence type="ECO:0000303" key="4">
    <source>
    </source>
</evidence>
<evidence type="ECO:0000305" key="5"/>
<evidence type="ECO:0000305" key="6">
    <source>
    </source>
</evidence>
<feature type="chain" id="PRO_0000221075" description="Phosphatidylcholine:ceramide cholinephosphotransferase 2">
    <location>
        <begin position="1"/>
        <end position="335"/>
    </location>
</feature>
<feature type="transmembrane region" description="Helical" evidence="2">
    <location>
        <begin position="60"/>
        <end position="80"/>
    </location>
</feature>
<feature type="transmembrane region" description="Helical" evidence="2">
    <location>
        <begin position="104"/>
        <end position="124"/>
    </location>
</feature>
<feature type="transmembrane region" description="Helical" evidence="2">
    <location>
        <begin position="136"/>
        <end position="156"/>
    </location>
</feature>
<feature type="transmembrane region" description="Helical" evidence="2">
    <location>
        <begin position="200"/>
        <end position="220"/>
    </location>
</feature>
<feature type="transmembrane region" description="Helical" evidence="2">
    <location>
        <begin position="229"/>
        <end position="249"/>
    </location>
</feature>
<feature type="transmembrane region" description="Helical" evidence="2">
    <location>
        <begin position="258"/>
        <end position="278"/>
    </location>
</feature>
<feature type="topological domain" description="Cytoplasmic" evidence="2">
    <location>
        <begin position="279"/>
        <end position="335"/>
    </location>
</feature>
<feature type="active site" evidence="1">
    <location>
        <position position="210"/>
    </location>
</feature>
<feature type="active site" evidence="1">
    <location>
        <position position="253"/>
    </location>
</feature>
<feature type="active site" evidence="1">
    <location>
        <position position="257"/>
    </location>
</feature>
<keyword id="KW-0443">Lipid metabolism</keyword>
<keyword id="KW-0472">Membrane</keyword>
<keyword id="KW-1185">Reference proteome</keyword>
<keyword id="KW-0746">Sphingolipid metabolism</keyword>
<keyword id="KW-0808">Transferase</keyword>
<keyword id="KW-0812">Transmembrane</keyword>
<keyword id="KW-1133">Transmembrane helix</keyword>
<gene>
    <name type="primary">sms-2</name>
    <name type="ORF">F53H8.4</name>
</gene>
<comment type="function">
    <text evidence="3">Sphingomyelin synthases (SM synthase or SMS) synthesize the sphingolipid sphingomyelin (SM) through transfer of the phosphatidyl head group of 1,2-diacyl-sn-glycero-3-phosphocholine (phosphatidylcholine, PC) on to the primary hydroxyl of ceramide (N-acylsphingoid base), yielding 1,2-diacyl-sn-glycerol (diacylglycerol, DAG) as a side product. Functions as a bidirectional lipid cholinephosphotransferases capable of converting PC and ceramide to SM and DAG and vice versa depending on the respective levels of ceramide and DAG as phosphocholine acceptors, respectively.</text>
</comment>
<comment type="catalytic activity">
    <reaction evidence="3">
        <text>an N-acylsphing-4-enine + a 1,2-diacyl-sn-glycero-3-phosphocholine = a sphingomyelin + a 1,2-diacyl-sn-glycerol</text>
        <dbReference type="Rhea" id="RHEA:18765"/>
        <dbReference type="ChEBI" id="CHEBI:17636"/>
        <dbReference type="ChEBI" id="CHEBI:17815"/>
        <dbReference type="ChEBI" id="CHEBI:52639"/>
        <dbReference type="ChEBI" id="CHEBI:57643"/>
        <dbReference type="EC" id="2.7.8.27"/>
    </reaction>
    <physiologicalReaction direction="left-to-right" evidence="3">
        <dbReference type="Rhea" id="RHEA:18766"/>
    </physiologicalReaction>
    <physiologicalReaction direction="right-to-left" evidence="3">
        <dbReference type="Rhea" id="RHEA:18767"/>
    </physiologicalReaction>
</comment>
<comment type="catalytic activity">
    <reaction evidence="6">
        <text>an N-acyl-15-methylhexadecasphing-4-enine + a 1,2-diacyl-sn-glycero-3-phosphocholine = an N-acyl-15-methylhexadecasphing-4-enine-1-phosphocholine + a 1,2-diacyl-sn-glycerol</text>
        <dbReference type="Rhea" id="RHEA:34607"/>
        <dbReference type="ChEBI" id="CHEBI:17815"/>
        <dbReference type="ChEBI" id="CHEBI:57643"/>
        <dbReference type="ChEBI" id="CHEBI:70775"/>
        <dbReference type="ChEBI" id="CHEBI:70846"/>
    </reaction>
    <physiologicalReaction direction="left-to-right" evidence="6">
        <dbReference type="Rhea" id="RHEA:34608"/>
    </physiologicalReaction>
    <physiologicalReaction direction="right-to-left" evidence="6">
        <dbReference type="Rhea" id="RHEA:34609"/>
    </physiologicalReaction>
</comment>
<comment type="pathway">
    <text evidence="3">Lipid metabolism; sphingolipid metabolism.</text>
</comment>
<comment type="subcellular location">
    <subcellularLocation>
        <location evidence="5">Membrane</location>
        <topology evidence="5">Multi-pass membrane protein</topology>
    </subcellularLocation>
</comment>
<comment type="similarity">
    <text evidence="5">Belongs to the sphingomyelin synthase family.</text>
</comment>
<name>SMS2_CAEEL</name>
<reference key="1">
    <citation type="journal article" date="1998" name="Science">
        <title>Genome sequence of the nematode C. elegans: a platform for investigating biology.</title>
        <authorList>
            <consortium name="The C. elegans sequencing consortium"/>
        </authorList>
    </citation>
    <scope>NUCLEOTIDE SEQUENCE [LARGE SCALE GENOMIC DNA]</scope>
    <source>
        <strain>Bristol N2</strain>
    </source>
</reference>
<reference evidence="5" key="2">
    <citation type="journal article" date="2004" name="EMBO J.">
        <title>Identification of a family of animal sphingomyelin synthases.</title>
        <authorList>
            <person name="Huitema K."/>
            <person name="Van Den Dikkenberg J."/>
            <person name="Brouwers J.F.H.M."/>
            <person name="Holthuis J.C."/>
        </authorList>
    </citation>
    <scope>FUNCTION</scope>
    <scope>CATALYTIC ACTIVITY</scope>
    <scope>PATHWAY</scope>
</reference>
<proteinExistence type="evidence at protein level"/>
<dbReference type="EC" id="2.7.8.27" evidence="3"/>
<dbReference type="EMBL" id="FO080855">
    <property type="protein sequence ID" value="CCD67244.1"/>
    <property type="molecule type" value="Genomic_DNA"/>
</dbReference>
<dbReference type="PIR" id="T34296">
    <property type="entry name" value="T34296"/>
</dbReference>
<dbReference type="RefSeq" id="NP_508182.1">
    <property type="nucleotide sequence ID" value="NM_075781.6"/>
</dbReference>
<dbReference type="SMR" id="Q20735"/>
<dbReference type="FunCoup" id="Q20735">
    <property type="interactions" value="80"/>
</dbReference>
<dbReference type="STRING" id="6239.F53H8.4.1"/>
<dbReference type="SwissLipids" id="SLP:000000014"/>
<dbReference type="PaxDb" id="6239-F53H8.4"/>
<dbReference type="EnsemblMetazoa" id="F53H8.4.1">
    <property type="protein sequence ID" value="F53H8.4.1"/>
    <property type="gene ID" value="WBGene00004893"/>
</dbReference>
<dbReference type="GeneID" id="180445"/>
<dbReference type="KEGG" id="cel:CELE_F53H8.4"/>
<dbReference type="UCSC" id="F53H8.4">
    <property type="organism name" value="c. elegans"/>
</dbReference>
<dbReference type="AGR" id="WB:WBGene00004893"/>
<dbReference type="CTD" id="180445"/>
<dbReference type="WormBase" id="F53H8.4">
    <property type="protein sequence ID" value="CE04657"/>
    <property type="gene ID" value="WBGene00004893"/>
    <property type="gene designation" value="sms-2"/>
</dbReference>
<dbReference type="eggNOG" id="KOG3058">
    <property type="taxonomic scope" value="Eukaryota"/>
</dbReference>
<dbReference type="HOGENOM" id="CLU_027104_3_0_1"/>
<dbReference type="InParanoid" id="Q20735"/>
<dbReference type="OMA" id="RLWWFWL"/>
<dbReference type="OrthoDB" id="422827at2759"/>
<dbReference type="PhylomeDB" id="Q20735"/>
<dbReference type="BRENDA" id="2.7.8.27">
    <property type="organism ID" value="1045"/>
</dbReference>
<dbReference type="Reactome" id="R-CEL-1660661">
    <property type="pathway name" value="Sphingolipid de novo biosynthesis"/>
</dbReference>
<dbReference type="UniPathway" id="UPA00222"/>
<dbReference type="PRO" id="PR:Q20735"/>
<dbReference type="Proteomes" id="UP000001940">
    <property type="component" value="Chromosome X"/>
</dbReference>
<dbReference type="Bgee" id="WBGene00004893">
    <property type="expression patterns" value="Expressed in pharyngeal muscle cell (C elegans) and 4 other cell types or tissues"/>
</dbReference>
<dbReference type="GO" id="GO:0005789">
    <property type="term" value="C:endoplasmic reticulum membrane"/>
    <property type="evidence" value="ECO:0000318"/>
    <property type="project" value="GO_Central"/>
</dbReference>
<dbReference type="GO" id="GO:0000139">
    <property type="term" value="C:Golgi membrane"/>
    <property type="evidence" value="ECO:0000318"/>
    <property type="project" value="GO_Central"/>
</dbReference>
<dbReference type="GO" id="GO:0016020">
    <property type="term" value="C:membrane"/>
    <property type="evidence" value="ECO:0000303"/>
    <property type="project" value="UniProtKB"/>
</dbReference>
<dbReference type="GO" id="GO:0005886">
    <property type="term" value="C:plasma membrane"/>
    <property type="evidence" value="ECO:0000318"/>
    <property type="project" value="GO_Central"/>
</dbReference>
<dbReference type="GO" id="GO:0047493">
    <property type="term" value="F:ceramide cholinephosphotransferase activity"/>
    <property type="evidence" value="ECO:0000250"/>
    <property type="project" value="UniProtKB"/>
</dbReference>
<dbReference type="GO" id="GO:0033188">
    <property type="term" value="F:sphingomyelin synthase activity"/>
    <property type="evidence" value="ECO:0000250"/>
    <property type="project" value="UniProtKB"/>
</dbReference>
<dbReference type="GO" id="GO:0046513">
    <property type="term" value="P:ceramide biosynthetic process"/>
    <property type="evidence" value="ECO:0000318"/>
    <property type="project" value="GO_Central"/>
</dbReference>
<dbReference type="GO" id="GO:0006686">
    <property type="term" value="P:sphingomyelin biosynthetic process"/>
    <property type="evidence" value="ECO:0000250"/>
    <property type="project" value="UniProtKB"/>
</dbReference>
<dbReference type="InterPro" id="IPR045221">
    <property type="entry name" value="Sphingomyelin_synth-like"/>
</dbReference>
<dbReference type="InterPro" id="IPR025749">
    <property type="entry name" value="Sphingomyelin_synth-like_dom"/>
</dbReference>
<dbReference type="PANTHER" id="PTHR21290:SF23">
    <property type="entry name" value="PHOSPHATIDYLCHOLINE:CERAMIDE CHOLINEPHOSPHOTRANSFERASE 2"/>
    <property type="match status" value="1"/>
</dbReference>
<dbReference type="PANTHER" id="PTHR21290">
    <property type="entry name" value="SPHINGOMYELIN SYNTHETASE"/>
    <property type="match status" value="1"/>
</dbReference>
<dbReference type="Pfam" id="PF14360">
    <property type="entry name" value="PAP2_C"/>
    <property type="match status" value="1"/>
</dbReference>
<organism>
    <name type="scientific">Caenorhabditis elegans</name>
    <dbReference type="NCBI Taxonomy" id="6239"/>
    <lineage>
        <taxon>Eukaryota</taxon>
        <taxon>Metazoa</taxon>
        <taxon>Ecdysozoa</taxon>
        <taxon>Nematoda</taxon>
        <taxon>Chromadorea</taxon>
        <taxon>Rhabditida</taxon>
        <taxon>Rhabditina</taxon>
        <taxon>Rhabditomorpha</taxon>
        <taxon>Rhabditoidea</taxon>
        <taxon>Rhabditidae</taxon>
        <taxon>Peloderinae</taxon>
        <taxon>Caenorhabditis</taxon>
    </lineage>
</organism>